<gene>
    <name type="primary">mobC</name>
    <name type="ORF">DDB_G0293706</name>
</gene>
<reference key="1">
    <citation type="journal article" date="2005" name="Nature">
        <title>The genome of the social amoeba Dictyostelium discoideum.</title>
        <authorList>
            <person name="Eichinger L."/>
            <person name="Pachebat J.A."/>
            <person name="Gloeckner G."/>
            <person name="Rajandream M.A."/>
            <person name="Sucgang R."/>
            <person name="Berriman M."/>
            <person name="Song J."/>
            <person name="Olsen R."/>
            <person name="Szafranski K."/>
            <person name="Xu Q."/>
            <person name="Tunggal B."/>
            <person name="Kummerfeld S."/>
            <person name="Madera M."/>
            <person name="Konfortov B.A."/>
            <person name="Rivero F."/>
            <person name="Bankier A.T."/>
            <person name="Lehmann R."/>
            <person name="Hamlin N."/>
            <person name="Davies R."/>
            <person name="Gaudet P."/>
            <person name="Fey P."/>
            <person name="Pilcher K."/>
            <person name="Chen G."/>
            <person name="Saunders D."/>
            <person name="Sodergren E.J."/>
            <person name="Davis P."/>
            <person name="Kerhornou A."/>
            <person name="Nie X."/>
            <person name="Hall N."/>
            <person name="Anjard C."/>
            <person name="Hemphill L."/>
            <person name="Bason N."/>
            <person name="Farbrother P."/>
            <person name="Desany B."/>
            <person name="Just E."/>
            <person name="Morio T."/>
            <person name="Rost R."/>
            <person name="Churcher C.M."/>
            <person name="Cooper J."/>
            <person name="Haydock S."/>
            <person name="van Driessche N."/>
            <person name="Cronin A."/>
            <person name="Goodhead I."/>
            <person name="Muzny D.M."/>
            <person name="Mourier T."/>
            <person name="Pain A."/>
            <person name="Lu M."/>
            <person name="Harper D."/>
            <person name="Lindsay R."/>
            <person name="Hauser H."/>
            <person name="James K.D."/>
            <person name="Quiles M."/>
            <person name="Madan Babu M."/>
            <person name="Saito T."/>
            <person name="Buchrieser C."/>
            <person name="Wardroper A."/>
            <person name="Felder M."/>
            <person name="Thangavelu M."/>
            <person name="Johnson D."/>
            <person name="Knights A."/>
            <person name="Loulseged H."/>
            <person name="Mungall K.L."/>
            <person name="Oliver K."/>
            <person name="Price C."/>
            <person name="Quail M.A."/>
            <person name="Urushihara H."/>
            <person name="Hernandez J."/>
            <person name="Rabbinowitsch E."/>
            <person name="Steffen D."/>
            <person name="Sanders M."/>
            <person name="Ma J."/>
            <person name="Kohara Y."/>
            <person name="Sharp S."/>
            <person name="Simmonds M.N."/>
            <person name="Spiegler S."/>
            <person name="Tivey A."/>
            <person name="Sugano S."/>
            <person name="White B."/>
            <person name="Walker D."/>
            <person name="Woodward J.R."/>
            <person name="Winckler T."/>
            <person name="Tanaka Y."/>
            <person name="Shaulsky G."/>
            <person name="Schleicher M."/>
            <person name="Weinstock G.M."/>
            <person name="Rosenthal A."/>
            <person name="Cox E.C."/>
            <person name="Chisholm R.L."/>
            <person name="Gibbs R.A."/>
            <person name="Loomis W.F."/>
            <person name="Platzer M."/>
            <person name="Kay R.R."/>
            <person name="Williams J.G."/>
            <person name="Dear P.H."/>
            <person name="Noegel A.A."/>
            <person name="Barrell B.G."/>
            <person name="Kuspa A."/>
        </authorList>
    </citation>
    <scope>NUCLEOTIDE SEQUENCE [LARGE SCALE GENOMIC DNA]</scope>
    <source>
        <strain>AX4</strain>
    </source>
</reference>
<dbReference type="EMBL" id="AAFI02000218">
    <property type="protein sequence ID" value="EAL60665.1"/>
    <property type="molecule type" value="Genomic_DNA"/>
</dbReference>
<dbReference type="RefSeq" id="XP_629005.1">
    <property type="nucleotide sequence ID" value="XM_629003.1"/>
</dbReference>
<dbReference type="SMR" id="Q54BM4"/>
<dbReference type="FunCoup" id="Q54BM4">
    <property type="interactions" value="134"/>
</dbReference>
<dbReference type="STRING" id="44689.Q54BM4"/>
<dbReference type="PaxDb" id="44689-DDB0232216"/>
<dbReference type="EnsemblProtists" id="EAL60665">
    <property type="protein sequence ID" value="EAL60665"/>
    <property type="gene ID" value="DDB_G0293706"/>
</dbReference>
<dbReference type="GeneID" id="8629289"/>
<dbReference type="KEGG" id="ddi:DDB_G0293706"/>
<dbReference type="dictyBase" id="DDB_G0293706">
    <property type="gene designation" value="mobC"/>
</dbReference>
<dbReference type="VEuPathDB" id="AmoebaDB:DDB_G0293706"/>
<dbReference type="eggNOG" id="KOG0440">
    <property type="taxonomic scope" value="Eukaryota"/>
</dbReference>
<dbReference type="HOGENOM" id="CLU_038321_3_2_1"/>
<dbReference type="InParanoid" id="Q54BM4"/>
<dbReference type="OMA" id="AEHCSET"/>
<dbReference type="PhylomeDB" id="Q54BM4"/>
<dbReference type="PRO" id="PR:Q54BM4"/>
<dbReference type="Proteomes" id="UP000002195">
    <property type="component" value="Chromosome 6"/>
</dbReference>
<dbReference type="GO" id="GO:0005737">
    <property type="term" value="C:cytoplasm"/>
    <property type="evidence" value="ECO:0000318"/>
    <property type="project" value="GO_Central"/>
</dbReference>
<dbReference type="GO" id="GO:0005634">
    <property type="term" value="C:nucleus"/>
    <property type="evidence" value="ECO:0000318"/>
    <property type="project" value="GO_Central"/>
</dbReference>
<dbReference type="GO" id="GO:0046872">
    <property type="term" value="F:metal ion binding"/>
    <property type="evidence" value="ECO:0007669"/>
    <property type="project" value="UniProtKB-KW"/>
</dbReference>
<dbReference type="GO" id="GO:0030295">
    <property type="term" value="F:protein kinase activator activity"/>
    <property type="evidence" value="ECO:0000318"/>
    <property type="project" value="GO_Central"/>
</dbReference>
<dbReference type="GO" id="GO:0007165">
    <property type="term" value="P:signal transduction"/>
    <property type="evidence" value="ECO:0000318"/>
    <property type="project" value="GO_Central"/>
</dbReference>
<dbReference type="FunFam" id="1.20.140.30:FF:000001">
    <property type="entry name" value="MOB kinase activator 1A"/>
    <property type="match status" value="1"/>
</dbReference>
<dbReference type="Gene3D" id="1.20.140.30">
    <property type="entry name" value="MOB kinase activator"/>
    <property type="match status" value="1"/>
</dbReference>
<dbReference type="InterPro" id="IPR005301">
    <property type="entry name" value="MOB_kinase_act_fam"/>
</dbReference>
<dbReference type="InterPro" id="IPR036703">
    <property type="entry name" value="MOB_kinase_act_sf"/>
</dbReference>
<dbReference type="PANTHER" id="PTHR22599">
    <property type="entry name" value="MPS ONE BINDER KINASE ACTIVATOR-LIKE MOB"/>
    <property type="match status" value="1"/>
</dbReference>
<dbReference type="Pfam" id="PF03637">
    <property type="entry name" value="Mob1_phocein"/>
    <property type="match status" value="1"/>
</dbReference>
<dbReference type="SMART" id="SM01388">
    <property type="entry name" value="Mob1_phocein"/>
    <property type="match status" value="1"/>
</dbReference>
<dbReference type="SUPFAM" id="SSF101152">
    <property type="entry name" value="Mob1/phocein"/>
    <property type="match status" value="1"/>
</dbReference>
<organism>
    <name type="scientific">Dictyostelium discoideum</name>
    <name type="common">Social amoeba</name>
    <dbReference type="NCBI Taxonomy" id="44689"/>
    <lineage>
        <taxon>Eukaryota</taxon>
        <taxon>Amoebozoa</taxon>
        <taxon>Evosea</taxon>
        <taxon>Eumycetozoa</taxon>
        <taxon>Dictyostelia</taxon>
        <taxon>Dictyosteliales</taxon>
        <taxon>Dictyosteliaceae</taxon>
        <taxon>Dictyostelium</taxon>
    </lineage>
</organism>
<protein>
    <recommendedName>
        <fullName>MOB kinase activator-like 1 homolog C</fullName>
    </recommendedName>
    <alternativeName>
        <fullName>Mps one binder kinase activator-like 1 homolog C</fullName>
    </alternativeName>
</protein>
<evidence type="ECO:0000250" key="1"/>
<evidence type="ECO:0000305" key="2"/>
<keyword id="KW-0479">Metal-binding</keyword>
<keyword id="KW-1185">Reference proteome</keyword>
<keyword id="KW-0862">Zinc</keyword>
<comment type="similarity">
    <text evidence="2">Belongs to the MOB1/phocein family.</text>
</comment>
<sequence>MFKIFGSKAQTFKPKKSIKKGTKQYELHQKIKETLGSGDLTDAIKLPPDETLFEWLSVNTIDFFNQSNLLYGSITEFCTPKYCPSMSAGPQYEFLWADGKEIKKPIRVSAPAYVDYLMTWIQVQLDDEDIFPTKPTEDMPKNFLPTIKAIFKRLFRVYAHIYYSHMDRVSVLGVEAHLNTAFRHFYLFIKEFNLVDKKEMLPLQNIIDKINARKDI</sequence>
<accession>Q54BM4</accession>
<name>MOB1C_DICDI</name>
<feature type="chain" id="PRO_0000328576" description="MOB kinase activator-like 1 homolog C">
    <location>
        <begin position="1"/>
        <end position="216"/>
    </location>
</feature>
<feature type="binding site" evidence="1">
    <location>
        <position position="78"/>
    </location>
    <ligand>
        <name>Zn(2+)</name>
        <dbReference type="ChEBI" id="CHEBI:29105"/>
    </ligand>
</feature>
<feature type="binding site" evidence="1">
    <location>
        <position position="83"/>
    </location>
    <ligand>
        <name>Zn(2+)</name>
        <dbReference type="ChEBI" id="CHEBI:29105"/>
    </ligand>
</feature>
<feature type="binding site" evidence="1">
    <location>
        <position position="160"/>
    </location>
    <ligand>
        <name>Zn(2+)</name>
        <dbReference type="ChEBI" id="CHEBI:29105"/>
    </ligand>
</feature>
<feature type="binding site" evidence="1">
    <location>
        <position position="165"/>
    </location>
    <ligand>
        <name>Zn(2+)</name>
        <dbReference type="ChEBI" id="CHEBI:29105"/>
    </ligand>
</feature>
<proteinExistence type="inferred from homology"/>